<feature type="chain" id="PRO_0000441193" description="Aspirochlorine biosynthesis protein F">
    <location>
        <begin position="1"/>
        <end position="256"/>
    </location>
</feature>
<feature type="transmembrane region" description="Helical" evidence="1">
    <location>
        <begin position="21"/>
        <end position="41"/>
    </location>
</feature>
<feature type="transmembrane region" description="Helical" evidence="1">
    <location>
        <begin position="163"/>
        <end position="183"/>
    </location>
</feature>
<feature type="transmembrane region" description="Helical" evidence="1">
    <location>
        <begin position="214"/>
        <end position="234"/>
    </location>
</feature>
<feature type="glycosylation site" description="N-linked (GlcNAc...) asparagine" evidence="2">
    <location>
        <position position="19"/>
    </location>
</feature>
<organism>
    <name type="scientific">Aspergillus oryzae (strain ATCC 42149 / RIB 40)</name>
    <name type="common">Yellow koji mold</name>
    <dbReference type="NCBI Taxonomy" id="510516"/>
    <lineage>
        <taxon>Eukaryota</taxon>
        <taxon>Fungi</taxon>
        <taxon>Dikarya</taxon>
        <taxon>Ascomycota</taxon>
        <taxon>Pezizomycotina</taxon>
        <taxon>Eurotiomycetes</taxon>
        <taxon>Eurotiomycetidae</taxon>
        <taxon>Eurotiales</taxon>
        <taxon>Aspergillaceae</taxon>
        <taxon>Aspergillus</taxon>
        <taxon>Aspergillus subgen. Circumdati</taxon>
    </lineage>
</organism>
<proteinExistence type="inferred from homology"/>
<sequence>MSSTAFTSSLSNWDLYPTNGSITPHLLLVGAQILFLSGPHFHGRRTLAATTILSLAAIAQYNRFTNNPGVANLFALAWPHWLSAVEKIVFASPEGPEADLWRVDRVPREAMSWPVFGWRKVKWAVTLLLNLRGIRWSFQVKNVPKMPERMTRGQFLRWRLGELVWVLLMTDLVSQMMLRFFFTDAAGALGNLDSKYITIRDARWGWSLLKALTFGLGPYFFINMQYLVVSILAVAMGISRPEVGSCPPRRSNRQPC</sequence>
<evidence type="ECO:0000255" key="1"/>
<evidence type="ECO:0000255" key="2">
    <source>
        <dbReference type="PROSITE-ProRule" id="PRU00498"/>
    </source>
</evidence>
<evidence type="ECO:0000269" key="3">
    <source>
    </source>
</evidence>
<evidence type="ECO:0000303" key="4">
    <source>
    </source>
</evidence>
<evidence type="ECO:0000305" key="5">
    <source>
    </source>
</evidence>
<keyword id="KW-0325">Glycoprotein</keyword>
<keyword id="KW-0472">Membrane</keyword>
<keyword id="KW-1185">Reference proteome</keyword>
<keyword id="KW-0812">Transmembrane</keyword>
<keyword id="KW-1133">Transmembrane helix</keyword>
<name>ACLF_ASPOR</name>
<reference key="1">
    <citation type="journal article" date="2005" name="Nature">
        <title>Genome sequencing and analysis of Aspergillus oryzae.</title>
        <authorList>
            <person name="Machida M."/>
            <person name="Asai K."/>
            <person name="Sano M."/>
            <person name="Tanaka T."/>
            <person name="Kumagai T."/>
            <person name="Terai G."/>
            <person name="Kusumoto K."/>
            <person name="Arima T."/>
            <person name="Akita O."/>
            <person name="Kashiwagi Y."/>
            <person name="Abe K."/>
            <person name="Gomi K."/>
            <person name="Horiuchi H."/>
            <person name="Kitamoto K."/>
            <person name="Kobayashi T."/>
            <person name="Takeuchi M."/>
            <person name="Denning D.W."/>
            <person name="Galagan J.E."/>
            <person name="Nierman W.C."/>
            <person name="Yu J."/>
            <person name="Archer D.B."/>
            <person name="Bennett J.W."/>
            <person name="Bhatnagar D."/>
            <person name="Cleveland T.E."/>
            <person name="Fedorova N.D."/>
            <person name="Gotoh O."/>
            <person name="Horikawa H."/>
            <person name="Hosoyama A."/>
            <person name="Ichinomiya M."/>
            <person name="Igarashi R."/>
            <person name="Iwashita K."/>
            <person name="Juvvadi P.R."/>
            <person name="Kato M."/>
            <person name="Kato Y."/>
            <person name="Kin T."/>
            <person name="Kokubun A."/>
            <person name="Maeda H."/>
            <person name="Maeyama N."/>
            <person name="Maruyama J."/>
            <person name="Nagasaki H."/>
            <person name="Nakajima T."/>
            <person name="Oda K."/>
            <person name="Okada K."/>
            <person name="Paulsen I."/>
            <person name="Sakamoto K."/>
            <person name="Sawano T."/>
            <person name="Takahashi M."/>
            <person name="Takase K."/>
            <person name="Terabayashi Y."/>
            <person name="Wortman J.R."/>
            <person name="Yamada O."/>
            <person name="Yamagata Y."/>
            <person name="Anazawa H."/>
            <person name="Hata Y."/>
            <person name="Koide Y."/>
            <person name="Komori T."/>
            <person name="Koyama Y."/>
            <person name="Minetoki T."/>
            <person name="Suharnan S."/>
            <person name="Tanaka A."/>
            <person name="Isono K."/>
            <person name="Kuhara S."/>
            <person name="Ogasawara N."/>
            <person name="Kikuchi H."/>
        </authorList>
    </citation>
    <scope>NUCLEOTIDE SEQUENCE [LARGE SCALE GENOMIC DNA]</scope>
    <source>
        <strain>ATCC 42149 / RIB 40</strain>
    </source>
</reference>
<reference key="2">
    <citation type="journal article" date="2014" name="Angew. Chem. Int. Ed.">
        <title>Biosynthesis of the halogenated mycotoxin aspirochlorine in koji mold involves a cryptic amino acid conversion.</title>
        <authorList>
            <person name="Chankhamjon P."/>
            <person name="Boettger-Schmidt D."/>
            <person name="Scherlach K."/>
            <person name="Urbansky B."/>
            <person name="Lackner G."/>
            <person name="Kalb D."/>
            <person name="Dahse H.M."/>
            <person name="Hoffmeister D."/>
            <person name="Hertweck C."/>
        </authorList>
    </citation>
    <scope>FUNCTION</scope>
    <scope>PATHWAY</scope>
</reference>
<dbReference type="EMBL" id="BA000050">
    <property type="protein sequence ID" value="BAE56597.1"/>
    <property type="molecule type" value="Genomic_DNA"/>
</dbReference>
<dbReference type="GlyCosmos" id="Q2UPB8">
    <property type="glycosylation" value="1 site, No reported glycans"/>
</dbReference>
<dbReference type="EnsemblFungi" id="BAE56597">
    <property type="protein sequence ID" value="BAE56597"/>
    <property type="gene ID" value="AO090001000034"/>
</dbReference>
<dbReference type="HOGENOM" id="CLU_1157101_0_0_1"/>
<dbReference type="OMA" id="ARFLIWR"/>
<dbReference type="Proteomes" id="UP000006564">
    <property type="component" value="Chromosome 2"/>
</dbReference>
<dbReference type="GO" id="GO:0016020">
    <property type="term" value="C:membrane"/>
    <property type="evidence" value="ECO:0007669"/>
    <property type="project" value="UniProtKB-SubCell"/>
</dbReference>
<comment type="function">
    <text evidence="3">Part of the gene cluster that mediates the biosynthesis of aspirochlorine (or antibiotic A30641), an unusual halogenated spiro compound with distinctive antifungal properties due to selective inhibition of protein biosynthesis, and which is also active against bacteria, viruses, and murine tumor cells (PubMed:25302411). The non-ribosomal peptide synthetase (NRPS) aclP is responsible the formation of the diketopiperazine (DKP) core from the condensation of 2 phenylalanine residues (PubMed:25302411). One Phe residue is tailored into chlorotyrosine by hydroxylation and chlorination, whereas the second Phe undergoes an unprecedented C-C bond cleavage to be converted into glycine (PubMed:25302411). After formation of the DKP, sulfur is incorporated into the DKP by conjugation with glutathione by aclG, followed by its stepwise degradation to the thiol by aclI, aclJ and aclK, and the dithiol oxidation by aclT (PubMed:25302411). In addition, oxygenases (aclB, aclC, aclL and aclO) and O-methyltransferases (aclM and aclU) act as tailoring enzymes to produce the intermediate dechloroaspirochlorine (PubMed:25302411). Ultimately, chlorination of dechloroaspirochlorine by the halogenase aclH is the last step in the aspirochlorine pathway (PubMed:25302411).</text>
</comment>
<comment type="pathway">
    <text evidence="5">Mycotoxin biosynthesis.</text>
</comment>
<comment type="subcellular location">
    <subcellularLocation>
        <location evidence="1">Membrane</location>
        <topology evidence="1">Multi-pass membrane protein</topology>
    </subcellularLocation>
</comment>
<accession>Q2UPB8</accession>
<protein>
    <recommendedName>
        <fullName evidence="4">Aspirochlorine biosynthesis protein F</fullName>
    </recommendedName>
</protein>
<gene>
    <name evidence="4" type="primary">aclF</name>
    <name type="ORF">AO090001000034</name>
</gene>